<accession>A7ZE62</accession>
<protein>
    <recommendedName>
        <fullName evidence="1">Alanine--tRNA ligase</fullName>
        <ecNumber evidence="1">6.1.1.7</ecNumber>
    </recommendedName>
    <alternativeName>
        <fullName evidence="1">Alanyl-tRNA synthetase</fullName>
        <shortName evidence="1">AlaRS</shortName>
    </alternativeName>
</protein>
<keyword id="KW-0030">Aminoacyl-tRNA synthetase</keyword>
<keyword id="KW-0067">ATP-binding</keyword>
<keyword id="KW-0963">Cytoplasm</keyword>
<keyword id="KW-0436">Ligase</keyword>
<keyword id="KW-0479">Metal-binding</keyword>
<keyword id="KW-0547">Nucleotide-binding</keyword>
<keyword id="KW-0648">Protein biosynthesis</keyword>
<keyword id="KW-0694">RNA-binding</keyword>
<keyword id="KW-0820">tRNA-binding</keyword>
<keyword id="KW-0862">Zinc</keyword>
<organism>
    <name type="scientific">Campylobacter concisus (strain 13826)</name>
    <dbReference type="NCBI Taxonomy" id="360104"/>
    <lineage>
        <taxon>Bacteria</taxon>
        <taxon>Pseudomonadati</taxon>
        <taxon>Campylobacterota</taxon>
        <taxon>Epsilonproteobacteria</taxon>
        <taxon>Campylobacterales</taxon>
        <taxon>Campylobacteraceae</taxon>
        <taxon>Campylobacter</taxon>
    </lineage>
</organism>
<feature type="chain" id="PRO_0000347538" description="Alanine--tRNA ligase">
    <location>
        <begin position="1"/>
        <end position="852"/>
    </location>
</feature>
<feature type="binding site" evidence="1">
    <location>
        <position position="554"/>
    </location>
    <ligand>
        <name>Zn(2+)</name>
        <dbReference type="ChEBI" id="CHEBI:29105"/>
    </ligand>
</feature>
<feature type="binding site" evidence="1">
    <location>
        <position position="558"/>
    </location>
    <ligand>
        <name>Zn(2+)</name>
        <dbReference type="ChEBI" id="CHEBI:29105"/>
    </ligand>
</feature>
<feature type="binding site" evidence="1">
    <location>
        <position position="656"/>
    </location>
    <ligand>
        <name>Zn(2+)</name>
        <dbReference type="ChEBI" id="CHEBI:29105"/>
    </ligand>
</feature>
<feature type="binding site" evidence="1">
    <location>
        <position position="660"/>
    </location>
    <ligand>
        <name>Zn(2+)</name>
        <dbReference type="ChEBI" id="CHEBI:29105"/>
    </ligand>
</feature>
<evidence type="ECO:0000255" key="1">
    <source>
        <dbReference type="HAMAP-Rule" id="MF_00036"/>
    </source>
</evidence>
<sequence>MQNLDIRKAYLDFFKSKGHEVVASAPLVPNDATLLFTNAGMVPFKSIFTGEVPRPTPPIRTSCQTCIRAGGKHNDLDNVGYTARHHTFFEMLGNFSFGEYFKKEAIAYAWEFVTEVLKLPKDKLYVTVHESDYEAFEIWSTHIAKERIYRFGDHDNFWQMGDTGPCGPCSEIFYDQGAEHFNTPEDYMGGDGDRFLEIWNLVFMQYERSADGKLSPLPKPSIDTGMGLERVTAILQGKFSNYDSTLFMPLISEVAKLCGKPYVYESGASYRVISDHIRSVTFLLAQGTTFDKEGRGYVLRRILRRAIRHGYLLGIKEPFMYKLVDKVCELMGGHYTYLNDKKAAVKEQIKLEEERFLATIASGLELFESELKNTKEIFSGEAAFKLYDTFGFPLDLTADMLREKGLKVDEARFDELMSEQKARAKAAWKGSGDKSAKGDFKELLEKFGENKFIGYEELKSKSKILALLDEEFKNIDGLDAGKEGWVMFDVTPFYAQSGGQCGDNGKIVGKADVLDTEKFHGLNLSLVKTSAALKVGDEVELEVGSDRAETARHHSATHLLHAALRAVVGTHIAQAGSNVEADRLRFDFSHPKALSGEEISKVENLVNEWIVNGANAKTQVMELEEAKKSGAIALFNEKYADKVRVVSFGDVSKELCGGTHVKNIDEIGSFFITKESGVSAGVRRIEAVCSRAALNLARSFRAELEELKEELKSAEPLNAVKKLKGEIKGLKDKLKNAKNSHALAFLNVNDTKLCVASIDSGDIKTLIDEFKNEHEKAAILLIQVDEEGKISLAAGVKNAPIKAGAWVKFAAQILGGNGGGKDDFATAGGKNALAIEDAIRSSVEYARQALEK</sequence>
<comment type="function">
    <text evidence="1">Catalyzes the attachment of alanine to tRNA(Ala) in a two-step reaction: alanine is first activated by ATP to form Ala-AMP and then transferred to the acceptor end of tRNA(Ala). Also edits incorrectly charged Ser-tRNA(Ala) and Gly-tRNA(Ala) via its editing domain.</text>
</comment>
<comment type="catalytic activity">
    <reaction evidence="1">
        <text>tRNA(Ala) + L-alanine + ATP = L-alanyl-tRNA(Ala) + AMP + diphosphate</text>
        <dbReference type="Rhea" id="RHEA:12540"/>
        <dbReference type="Rhea" id="RHEA-COMP:9657"/>
        <dbReference type="Rhea" id="RHEA-COMP:9923"/>
        <dbReference type="ChEBI" id="CHEBI:30616"/>
        <dbReference type="ChEBI" id="CHEBI:33019"/>
        <dbReference type="ChEBI" id="CHEBI:57972"/>
        <dbReference type="ChEBI" id="CHEBI:78442"/>
        <dbReference type="ChEBI" id="CHEBI:78497"/>
        <dbReference type="ChEBI" id="CHEBI:456215"/>
        <dbReference type="EC" id="6.1.1.7"/>
    </reaction>
</comment>
<comment type="cofactor">
    <cofactor evidence="1">
        <name>Zn(2+)</name>
        <dbReference type="ChEBI" id="CHEBI:29105"/>
    </cofactor>
    <text evidence="1">Binds 1 zinc ion per subunit.</text>
</comment>
<comment type="subcellular location">
    <subcellularLocation>
        <location evidence="1">Cytoplasm</location>
    </subcellularLocation>
</comment>
<comment type="domain">
    <text evidence="1">Consists of three domains; the N-terminal catalytic domain, the editing domain and the C-terminal C-Ala domain. The editing domain removes incorrectly charged amino acids, while the C-Ala domain, along with tRNA(Ala), serves as a bridge to cooperatively bring together the editing and aminoacylation centers thus stimulating deacylation of misacylated tRNAs.</text>
</comment>
<comment type="similarity">
    <text evidence="1">Belongs to the class-II aminoacyl-tRNA synthetase family.</text>
</comment>
<reference key="1">
    <citation type="submission" date="2007-10" db="EMBL/GenBank/DDBJ databases">
        <title>Genome sequence of Campylobacter concisus 13826 isolated from human feces.</title>
        <authorList>
            <person name="Fouts D.E."/>
            <person name="Mongodin E.F."/>
            <person name="Puiu D."/>
            <person name="Sebastian Y."/>
            <person name="Miller W.G."/>
            <person name="Mandrell R.E."/>
            <person name="On S."/>
            <person name="Nelson K.E."/>
        </authorList>
    </citation>
    <scope>NUCLEOTIDE SEQUENCE [LARGE SCALE GENOMIC DNA]</scope>
    <source>
        <strain>13826</strain>
    </source>
</reference>
<name>SYA_CAMC1</name>
<proteinExistence type="inferred from homology"/>
<dbReference type="EC" id="6.1.1.7" evidence="1"/>
<dbReference type="EMBL" id="CP000792">
    <property type="protein sequence ID" value="EAT97744.1"/>
    <property type="molecule type" value="Genomic_DNA"/>
</dbReference>
<dbReference type="RefSeq" id="WP_012139986.1">
    <property type="nucleotide sequence ID" value="NC_009802.2"/>
</dbReference>
<dbReference type="SMR" id="A7ZE62"/>
<dbReference type="STRING" id="360104.CCC13826_0051"/>
<dbReference type="KEGG" id="cco:CCC13826_0051"/>
<dbReference type="eggNOG" id="COG0013">
    <property type="taxonomic scope" value="Bacteria"/>
</dbReference>
<dbReference type="HOGENOM" id="CLU_004485_1_1_7"/>
<dbReference type="OrthoDB" id="9803884at2"/>
<dbReference type="Proteomes" id="UP000001121">
    <property type="component" value="Chromosome"/>
</dbReference>
<dbReference type="GO" id="GO:0005829">
    <property type="term" value="C:cytosol"/>
    <property type="evidence" value="ECO:0007669"/>
    <property type="project" value="TreeGrafter"/>
</dbReference>
<dbReference type="GO" id="GO:0004813">
    <property type="term" value="F:alanine-tRNA ligase activity"/>
    <property type="evidence" value="ECO:0007669"/>
    <property type="project" value="UniProtKB-UniRule"/>
</dbReference>
<dbReference type="GO" id="GO:0002161">
    <property type="term" value="F:aminoacyl-tRNA deacylase activity"/>
    <property type="evidence" value="ECO:0007669"/>
    <property type="project" value="TreeGrafter"/>
</dbReference>
<dbReference type="GO" id="GO:0005524">
    <property type="term" value="F:ATP binding"/>
    <property type="evidence" value="ECO:0007669"/>
    <property type="project" value="UniProtKB-UniRule"/>
</dbReference>
<dbReference type="GO" id="GO:0000049">
    <property type="term" value="F:tRNA binding"/>
    <property type="evidence" value="ECO:0007669"/>
    <property type="project" value="UniProtKB-KW"/>
</dbReference>
<dbReference type="GO" id="GO:0008270">
    <property type="term" value="F:zinc ion binding"/>
    <property type="evidence" value="ECO:0007669"/>
    <property type="project" value="UniProtKB-UniRule"/>
</dbReference>
<dbReference type="GO" id="GO:0006419">
    <property type="term" value="P:alanyl-tRNA aminoacylation"/>
    <property type="evidence" value="ECO:0007669"/>
    <property type="project" value="UniProtKB-UniRule"/>
</dbReference>
<dbReference type="GO" id="GO:0045892">
    <property type="term" value="P:negative regulation of DNA-templated transcription"/>
    <property type="evidence" value="ECO:0007669"/>
    <property type="project" value="TreeGrafter"/>
</dbReference>
<dbReference type="CDD" id="cd00673">
    <property type="entry name" value="AlaRS_core"/>
    <property type="match status" value="1"/>
</dbReference>
<dbReference type="FunFam" id="3.10.310.40:FF:000001">
    <property type="entry name" value="Alanine--tRNA ligase"/>
    <property type="match status" value="1"/>
</dbReference>
<dbReference type="FunFam" id="3.30.54.20:FF:000001">
    <property type="entry name" value="Alanine--tRNA ligase"/>
    <property type="match status" value="1"/>
</dbReference>
<dbReference type="FunFam" id="3.30.930.10:FF:000004">
    <property type="entry name" value="Alanine--tRNA ligase"/>
    <property type="match status" value="1"/>
</dbReference>
<dbReference type="FunFam" id="3.30.980.10:FF:000004">
    <property type="entry name" value="Alanine--tRNA ligase, cytoplasmic"/>
    <property type="match status" value="1"/>
</dbReference>
<dbReference type="Gene3D" id="2.40.30.130">
    <property type="match status" value="1"/>
</dbReference>
<dbReference type="Gene3D" id="3.10.310.40">
    <property type="match status" value="1"/>
</dbReference>
<dbReference type="Gene3D" id="3.30.54.20">
    <property type="match status" value="1"/>
</dbReference>
<dbReference type="Gene3D" id="3.30.930.10">
    <property type="entry name" value="Bira Bifunctional Protein, Domain 2"/>
    <property type="match status" value="1"/>
</dbReference>
<dbReference type="Gene3D" id="3.30.980.10">
    <property type="entry name" value="Threonyl-trna Synthetase, Chain A, domain 2"/>
    <property type="match status" value="1"/>
</dbReference>
<dbReference type="HAMAP" id="MF_00036_B">
    <property type="entry name" value="Ala_tRNA_synth_B"/>
    <property type="match status" value="1"/>
</dbReference>
<dbReference type="InterPro" id="IPR045864">
    <property type="entry name" value="aa-tRNA-synth_II/BPL/LPL"/>
</dbReference>
<dbReference type="InterPro" id="IPR002318">
    <property type="entry name" value="Ala-tRNA-lgiase_IIc"/>
</dbReference>
<dbReference type="InterPro" id="IPR018162">
    <property type="entry name" value="Ala-tRNA-ligase_IIc_anticod-bd"/>
</dbReference>
<dbReference type="InterPro" id="IPR018165">
    <property type="entry name" value="Ala-tRNA-synth_IIc_core"/>
</dbReference>
<dbReference type="InterPro" id="IPR018164">
    <property type="entry name" value="Ala-tRNA-synth_IIc_N"/>
</dbReference>
<dbReference type="InterPro" id="IPR050058">
    <property type="entry name" value="Ala-tRNA_ligase"/>
</dbReference>
<dbReference type="InterPro" id="IPR023033">
    <property type="entry name" value="Ala_tRNA_ligase_euk/bac"/>
</dbReference>
<dbReference type="InterPro" id="IPR003156">
    <property type="entry name" value="DHHA1_dom"/>
</dbReference>
<dbReference type="InterPro" id="IPR018163">
    <property type="entry name" value="Thr/Ala-tRNA-synth_IIc_edit"/>
</dbReference>
<dbReference type="InterPro" id="IPR009000">
    <property type="entry name" value="Transl_B-barrel_sf"/>
</dbReference>
<dbReference type="InterPro" id="IPR012947">
    <property type="entry name" value="tRNA_SAD"/>
</dbReference>
<dbReference type="NCBIfam" id="TIGR00344">
    <property type="entry name" value="alaS"/>
    <property type="match status" value="1"/>
</dbReference>
<dbReference type="PANTHER" id="PTHR11777:SF9">
    <property type="entry name" value="ALANINE--TRNA LIGASE, CYTOPLASMIC"/>
    <property type="match status" value="1"/>
</dbReference>
<dbReference type="PANTHER" id="PTHR11777">
    <property type="entry name" value="ALANYL-TRNA SYNTHETASE"/>
    <property type="match status" value="1"/>
</dbReference>
<dbReference type="Pfam" id="PF02272">
    <property type="entry name" value="DHHA1"/>
    <property type="match status" value="1"/>
</dbReference>
<dbReference type="Pfam" id="PF01411">
    <property type="entry name" value="tRNA-synt_2c"/>
    <property type="match status" value="1"/>
</dbReference>
<dbReference type="Pfam" id="PF07973">
    <property type="entry name" value="tRNA_SAD"/>
    <property type="match status" value="1"/>
</dbReference>
<dbReference type="PRINTS" id="PR00980">
    <property type="entry name" value="TRNASYNTHALA"/>
</dbReference>
<dbReference type="SMART" id="SM00863">
    <property type="entry name" value="tRNA_SAD"/>
    <property type="match status" value="1"/>
</dbReference>
<dbReference type="SUPFAM" id="SSF55681">
    <property type="entry name" value="Class II aaRS and biotin synthetases"/>
    <property type="match status" value="1"/>
</dbReference>
<dbReference type="SUPFAM" id="SSF101353">
    <property type="entry name" value="Putative anticodon-binding domain of alanyl-tRNA synthetase (AlaRS)"/>
    <property type="match status" value="1"/>
</dbReference>
<dbReference type="SUPFAM" id="SSF55186">
    <property type="entry name" value="ThrRS/AlaRS common domain"/>
    <property type="match status" value="1"/>
</dbReference>
<dbReference type="SUPFAM" id="SSF50447">
    <property type="entry name" value="Translation proteins"/>
    <property type="match status" value="1"/>
</dbReference>
<dbReference type="PROSITE" id="PS50860">
    <property type="entry name" value="AA_TRNA_LIGASE_II_ALA"/>
    <property type="match status" value="1"/>
</dbReference>
<gene>
    <name evidence="1" type="primary">alaS</name>
    <name type="ordered locus">Ccon26_12140</name>
    <name type="ORF">CCC13826_0051</name>
</gene>